<sequence length="10" mass="1056">SPASGFFGMR</sequence>
<accession>P86560</accession>
<dbReference type="GO" id="GO:0005576">
    <property type="term" value="C:extracellular region"/>
    <property type="evidence" value="ECO:0007005"/>
    <property type="project" value="UniProtKB"/>
</dbReference>
<dbReference type="GO" id="GO:0007218">
    <property type="term" value="P:neuropeptide signaling pathway"/>
    <property type="evidence" value="ECO:0007669"/>
    <property type="project" value="UniProtKB-KW"/>
</dbReference>
<reference evidence="3" key="1">
    <citation type="journal article" date="2009" name="Peptides">
        <title>Neuropeptides in Heteroptera: identification of allatotropin-related peptide and tachykinin-related peptides using MALDI-TOF mass spectrometry.</title>
        <authorList>
            <person name="Neupert S."/>
            <person name="Russell W.K."/>
            <person name="Russell D.H."/>
            <person name="Lopez J.D. Jr."/>
            <person name="Predel R."/>
            <person name="Nachman R.J."/>
        </authorList>
    </citation>
    <scope>PROTEIN SEQUENCE</scope>
    <scope>SUBCELLULAR LOCATION</scope>
    <scope>TISSUE SPECIFICITY</scope>
    <scope>AMIDATION AT ARG-10</scope>
    <source>
        <tissue evidence="1">Antennal lobe</tissue>
    </source>
</reference>
<name>TRP4_ACRHI</name>
<evidence type="ECO:0000269" key="1">
    <source>
    </source>
</evidence>
<evidence type="ECO:0000303" key="2">
    <source>
    </source>
</evidence>
<evidence type="ECO:0000305" key="3"/>
<organism>
    <name type="scientific">Acrosternum hilare</name>
    <name type="common">Green stink bug</name>
    <name type="synonym">Nezara hilaris</name>
    <dbReference type="NCBI Taxonomy" id="244443"/>
    <lineage>
        <taxon>Eukaryota</taxon>
        <taxon>Metazoa</taxon>
        <taxon>Ecdysozoa</taxon>
        <taxon>Arthropoda</taxon>
        <taxon>Hexapoda</taxon>
        <taxon>Insecta</taxon>
        <taxon>Pterygota</taxon>
        <taxon>Neoptera</taxon>
        <taxon>Paraneoptera</taxon>
        <taxon>Hemiptera</taxon>
        <taxon>Heteroptera</taxon>
        <taxon>Panheteroptera</taxon>
        <taxon>Pentatomomorpha</taxon>
        <taxon>Pentatomoidea</taxon>
        <taxon>Pentatomidae</taxon>
        <taxon>Pentatominae</taxon>
        <taxon>Acrosternum</taxon>
    </lineage>
</organism>
<feature type="peptide" id="PRO_0000395629" description="Tachykinin-related peptide 4" evidence="1">
    <location>
        <begin position="1"/>
        <end position="10"/>
    </location>
</feature>
<feature type="modified residue" description="Arginine amide" evidence="1">
    <location>
        <position position="10"/>
    </location>
</feature>
<protein>
    <recommendedName>
        <fullName evidence="2">Tachykinin-related peptide 4</fullName>
        <shortName evidence="2">TKRP-4</shortName>
    </recommendedName>
</protein>
<keyword id="KW-0027">Amidation</keyword>
<keyword id="KW-0903">Direct protein sequencing</keyword>
<keyword id="KW-0527">Neuropeptide</keyword>
<keyword id="KW-0964">Secreted</keyword>
<proteinExistence type="evidence at protein level"/>
<comment type="subcellular location">
    <subcellularLocation>
        <location evidence="1 3">Secreted</location>
    </subcellularLocation>
</comment>
<comment type="tissue specificity">
    <text evidence="1">Expressed in the antennal lobe (at protein level).</text>
</comment>